<comment type="function">
    <text evidence="2 3">Catalyzes the NAD-dependent oxidation of either all-trans-retinol or 9-cis-retinol (By similarity). Also oxidizes long chain omega-hydroxy fatty acids, such as 20-HETE, producing both the intermediate aldehyde, 20-oxoarachidonate and the end product, a dicarboxylic acid, (5Z,8Z,11Z,14Z)-eicosatetraenedioate (By similarity). Also catalyzes the reduction of benzoquinones (By similarity).</text>
</comment>
<comment type="catalytic activity">
    <reaction evidence="2">
        <text>all-trans-retinol + NAD(+) = all-trans-retinal + NADH + H(+)</text>
        <dbReference type="Rhea" id="RHEA:21284"/>
        <dbReference type="ChEBI" id="CHEBI:15378"/>
        <dbReference type="ChEBI" id="CHEBI:17336"/>
        <dbReference type="ChEBI" id="CHEBI:17898"/>
        <dbReference type="ChEBI" id="CHEBI:57540"/>
        <dbReference type="ChEBI" id="CHEBI:57945"/>
        <dbReference type="EC" id="1.1.1.105"/>
    </reaction>
    <physiologicalReaction direction="left-to-right" evidence="2">
        <dbReference type="Rhea" id="RHEA:21285"/>
    </physiologicalReaction>
</comment>
<comment type="catalytic activity">
    <reaction evidence="2">
        <text>9-cis-retinol + NAD(+) = 9-cis-retinal + NADH + H(+)</text>
        <dbReference type="Rhea" id="RHEA:42052"/>
        <dbReference type="ChEBI" id="CHEBI:15378"/>
        <dbReference type="ChEBI" id="CHEBI:57540"/>
        <dbReference type="ChEBI" id="CHEBI:57945"/>
        <dbReference type="ChEBI" id="CHEBI:78272"/>
        <dbReference type="ChEBI" id="CHEBI:78273"/>
    </reaction>
    <physiologicalReaction direction="left-to-right" evidence="2">
        <dbReference type="Rhea" id="RHEA:42053"/>
    </physiologicalReaction>
</comment>
<comment type="catalytic activity">
    <reaction evidence="3">
        <text>20-oxo-(5Z,8Z,11Z,14Z)-eicosatetraenoate + NAD(+) + H2O = (5Z,8Z,11Z,14Z)-eicosatetraenedioate + NADH + 2 H(+)</text>
        <dbReference type="Rhea" id="RHEA:39803"/>
        <dbReference type="ChEBI" id="CHEBI:15377"/>
        <dbReference type="ChEBI" id="CHEBI:15378"/>
        <dbReference type="ChEBI" id="CHEBI:57540"/>
        <dbReference type="ChEBI" id="CHEBI:57945"/>
        <dbReference type="ChEBI" id="CHEBI:76645"/>
        <dbReference type="ChEBI" id="CHEBI:76647"/>
    </reaction>
    <physiologicalReaction direction="left-to-right" evidence="3">
        <dbReference type="Rhea" id="RHEA:39804"/>
    </physiologicalReaction>
</comment>
<comment type="catalytic activity">
    <reaction evidence="3">
        <text>20-hydroxy-(5Z,8Z,11Z,14Z)-eicosatetraenoate + NAD(+) = 20-oxo-(5Z,8Z,11Z,14Z)-eicosatetraenoate + NADH + H(+)</text>
        <dbReference type="Rhea" id="RHEA:39799"/>
        <dbReference type="ChEBI" id="CHEBI:15378"/>
        <dbReference type="ChEBI" id="CHEBI:57540"/>
        <dbReference type="ChEBI" id="CHEBI:57945"/>
        <dbReference type="ChEBI" id="CHEBI:76624"/>
        <dbReference type="ChEBI" id="CHEBI:76645"/>
    </reaction>
    <physiologicalReaction direction="left-to-right" evidence="3">
        <dbReference type="Rhea" id="RHEA:39800"/>
    </physiologicalReaction>
</comment>
<comment type="catalytic activity">
    <reaction evidence="2">
        <text>1,4-benzoquinone + NADH + H(+) = hydroquinone + NAD(+)</text>
        <dbReference type="Rhea" id="RHEA:60660"/>
        <dbReference type="ChEBI" id="CHEBI:15378"/>
        <dbReference type="ChEBI" id="CHEBI:16509"/>
        <dbReference type="ChEBI" id="CHEBI:17594"/>
        <dbReference type="ChEBI" id="CHEBI:57540"/>
        <dbReference type="ChEBI" id="CHEBI:57945"/>
    </reaction>
    <physiologicalReaction direction="left-to-right" evidence="2">
        <dbReference type="Rhea" id="RHEA:60661"/>
    </physiologicalReaction>
</comment>
<comment type="cofactor">
    <cofactor evidence="1">
        <name>Zn(2+)</name>
        <dbReference type="ChEBI" id="CHEBI:29105"/>
    </cofactor>
    <text evidence="1">Binds 2 Zn(2+) ions per subunit.</text>
</comment>
<comment type="activity regulation">
    <text evidence="3">Oxidation of 20-HETE is inhibited by low concentrations of N-heptylformamide. Oxidation of 20-HETE is a decreased by 55-65% by either all-trans-retinol or all-trans-retinoic acid. Strongly inhibited by omega-hydroxy fatty acids.</text>
</comment>
<comment type="subunit">
    <text>Homodimer.</text>
</comment>
<comment type="subcellular location">
    <subcellularLocation>
        <location>Cytoplasm</location>
    </subcellularLocation>
</comment>
<comment type="similarity">
    <text evidence="6">Belongs to the zinc-containing alcohol dehydrogenase family. Class-II subfamily.</text>
</comment>
<evidence type="ECO:0000250" key="1"/>
<evidence type="ECO:0000250" key="2">
    <source>
        <dbReference type="UniProtKB" id="P08319"/>
    </source>
</evidence>
<evidence type="ECO:0000250" key="3">
    <source>
        <dbReference type="UniProtKB" id="Q9QYY9"/>
    </source>
</evidence>
<evidence type="ECO:0000269" key="4">
    <source>
    </source>
</evidence>
<evidence type="ECO:0000269" key="5">
    <source>
    </source>
</evidence>
<evidence type="ECO:0000305" key="6"/>
<gene>
    <name evidence="2" type="primary">ADH4</name>
</gene>
<feature type="chain" id="PRO_0000160686" description="All-trans-retinol dehydrogenase [NAD(+)] ADH4">
    <location>
        <begin position="1"/>
        <end position="379"/>
    </location>
</feature>
<feature type="binding site" evidence="1">
    <location>
        <position position="46"/>
    </location>
    <ligand>
        <name>Zn(2+)</name>
        <dbReference type="ChEBI" id="CHEBI:29105"/>
        <label>1</label>
        <note>catalytic</note>
    </ligand>
</feature>
<feature type="binding site" evidence="1">
    <location>
        <position position="68"/>
    </location>
    <ligand>
        <name>Zn(2+)</name>
        <dbReference type="ChEBI" id="CHEBI:29105"/>
        <label>1</label>
        <note>catalytic</note>
    </ligand>
</feature>
<feature type="binding site" evidence="1">
    <location>
        <position position="98"/>
    </location>
    <ligand>
        <name>Zn(2+)</name>
        <dbReference type="ChEBI" id="CHEBI:29105"/>
        <label>2</label>
    </ligand>
</feature>
<feature type="binding site" evidence="1">
    <location>
        <position position="101"/>
    </location>
    <ligand>
        <name>Zn(2+)</name>
        <dbReference type="ChEBI" id="CHEBI:29105"/>
        <label>2</label>
    </ligand>
</feature>
<feature type="binding site" evidence="1">
    <location>
        <position position="104"/>
    </location>
    <ligand>
        <name>Zn(2+)</name>
        <dbReference type="ChEBI" id="CHEBI:29105"/>
        <label>2</label>
    </ligand>
</feature>
<feature type="binding site" evidence="1">
    <location>
        <position position="112"/>
    </location>
    <ligand>
        <name>Zn(2+)</name>
        <dbReference type="ChEBI" id="CHEBI:29105"/>
        <label>2</label>
    </ligand>
</feature>
<feature type="binding site" evidence="1">
    <location>
        <position position="179"/>
    </location>
    <ligand>
        <name>Zn(2+)</name>
        <dbReference type="ChEBI" id="CHEBI:29105"/>
        <label>1</label>
        <note>catalytic</note>
    </ligand>
</feature>
<feature type="binding site" evidence="1">
    <location>
        <begin position="204"/>
        <end position="209"/>
    </location>
    <ligand>
        <name>NAD(+)</name>
        <dbReference type="ChEBI" id="CHEBI:57540"/>
    </ligand>
</feature>
<feature type="binding site" evidence="1">
    <location>
        <position position="228"/>
    </location>
    <ligand>
        <name>NAD(+)</name>
        <dbReference type="ChEBI" id="CHEBI:57540"/>
    </ligand>
</feature>
<feature type="binding site" evidence="1">
    <location>
        <position position="233"/>
    </location>
    <ligand>
        <name>NAD(+)</name>
        <dbReference type="ChEBI" id="CHEBI:57540"/>
    </ligand>
</feature>
<feature type="binding site" evidence="1">
    <location>
        <begin position="297"/>
        <end position="299"/>
    </location>
    <ligand>
        <name>NAD(+)</name>
        <dbReference type="ChEBI" id="CHEBI:57540"/>
    </ligand>
</feature>
<feature type="binding site" evidence="1">
    <location>
        <position position="374"/>
    </location>
    <ligand>
        <name>NAD(+)</name>
        <dbReference type="ChEBI" id="CHEBI:57540"/>
    </ligand>
</feature>
<feature type="modified residue" description="N-acetylthreonine" evidence="4 5">
    <location>
        <position position="1"/>
    </location>
</feature>
<accession>P80468</accession>
<keyword id="KW-0007">Acetylation</keyword>
<keyword id="KW-0963">Cytoplasm</keyword>
<keyword id="KW-0903">Direct protein sequencing</keyword>
<keyword id="KW-0443">Lipid metabolism</keyword>
<keyword id="KW-0479">Metal-binding</keyword>
<keyword id="KW-0520">NAD</keyword>
<keyword id="KW-0560">Oxidoreductase</keyword>
<keyword id="KW-0862">Zinc</keyword>
<proteinExistence type="evidence at protein level"/>
<sequence length="379" mass="40310">TTEGKVIKCKAAIAWEAGKPLSVEEIEVSPPKDHEVRVKIVATGVCRTDEHAINPSFKEGVFPVILGHEGAGIVESIGQGVSKFKPGDKVIPLYMPQCGHCKFCLNPKTNLCEKISKIKTPISDQEVMSDGTSRFTCKGKPIYHFMGTSTFSEYTVVSESSLAKIDAAAPLDKVCLIGCGFSTGYGAAINTAQVEPGSTCAVFGLGGVGLSAVMGCKAAGASKIFGIDINKDKFPLAKKLGATDCLNPQDIRKPVQEIIAEMTNGGVDFAIECIGNPDVMKAAFESTTVGWGTCVIVGVAVGEQSIPFSPMQLIMGRKIKATFFGGWKSVKSVPKLVSDYMAKKFDLDALVSHTLPLDKINDAFDLMNAGKSNRTILVF</sequence>
<protein>
    <recommendedName>
        <fullName evidence="2">All-trans-retinol dehydrogenase [NAD(+)] ADH4</fullName>
        <ecNumber evidence="2">1.1.1.105</ecNumber>
    </recommendedName>
    <alternativeName>
        <fullName>Alcohol dehydrogenase 4</fullName>
    </alternativeName>
    <alternativeName>
        <fullName>Alcohol dehydrogenase class II</fullName>
    </alternativeName>
</protein>
<organism>
    <name type="scientific">Struthio camelus</name>
    <name type="common">Common ostrich</name>
    <dbReference type="NCBI Taxonomy" id="8801"/>
    <lineage>
        <taxon>Eukaryota</taxon>
        <taxon>Metazoa</taxon>
        <taxon>Chordata</taxon>
        <taxon>Craniata</taxon>
        <taxon>Vertebrata</taxon>
        <taxon>Euteleostomi</taxon>
        <taxon>Archelosauria</taxon>
        <taxon>Archosauria</taxon>
        <taxon>Dinosauria</taxon>
        <taxon>Saurischia</taxon>
        <taxon>Theropoda</taxon>
        <taxon>Coelurosauria</taxon>
        <taxon>Aves</taxon>
        <taxon>Palaeognathae</taxon>
        <taxon>Struthioniformes</taxon>
        <taxon>Struthionidae</taxon>
        <taxon>Struthio</taxon>
    </lineage>
</organism>
<reference key="1">
    <citation type="journal article" date="1995" name="Proc. Natl. Acad. Sci. U.S.A.">
        <title>The vertebrate alcohol dehydrogenase system: variable class II type form elucidates separate stages of enzymogenesis.</title>
        <authorList>
            <person name="Hjelmqvist L."/>
            <person name="Estonius M."/>
            <person name="Joernvall H."/>
        </authorList>
    </citation>
    <scope>PROTEIN SEQUENCE</scope>
</reference>
<reference key="2">
    <citation type="journal article" date="1996" name="FEBS Lett.">
        <title>Alcoholytic deblocking of N-terminally acetylated peptides and proteins for sequence analysis.</title>
        <authorList>
            <person name="Bergman T."/>
            <person name="Gheorghe M.T."/>
            <person name="Hjelmqvist L."/>
            <person name="Joernvall H."/>
        </authorList>
    </citation>
    <scope>PROTEIN SEQUENCE OF 1-13</scope>
    <scope>ACETYLATION AT THR-1</scope>
</reference>
<reference key="3">
    <citation type="journal article" date="1995" name="FEBS Lett.">
        <title>Multiplicity of N-terminal structures of medium-chain alcohol dehydrogenases. Mass-spectrometric analysis of plant, lower vertebrate and higher vertebrate class I, II, and III forms of the enzyme.</title>
        <authorList>
            <person name="Hjelmqvist L."/>
            <person name="Hackett M."/>
            <person name="Shafqat J."/>
            <person name="Danielsson O."/>
            <person name="Iida J."/>
            <person name="Hendrickson R.C."/>
            <person name="Michel H."/>
            <person name="Shabanowitz J."/>
            <person name="Hunt D.F."/>
            <person name="Joernvall H."/>
        </authorList>
    </citation>
    <scope>PARTIAL PROTEIN SEQUENCE</scope>
    <scope>ACETYLATION AT THR-1</scope>
</reference>
<name>ADH4_STRCA</name>
<dbReference type="EC" id="1.1.1.105" evidence="2"/>
<dbReference type="SMR" id="P80468"/>
<dbReference type="iPTMnet" id="P80468"/>
<dbReference type="SABIO-RK" id="P80468"/>
<dbReference type="GO" id="GO:0005829">
    <property type="term" value="C:cytosol"/>
    <property type="evidence" value="ECO:0007669"/>
    <property type="project" value="TreeGrafter"/>
</dbReference>
<dbReference type="GO" id="GO:0004022">
    <property type="term" value="F:alcohol dehydrogenase (NAD+) activity"/>
    <property type="evidence" value="ECO:0000250"/>
    <property type="project" value="UniProtKB"/>
</dbReference>
<dbReference type="GO" id="GO:0004745">
    <property type="term" value="F:all-trans-retinol dehydrogenase (NAD+) activity"/>
    <property type="evidence" value="ECO:0000250"/>
    <property type="project" value="UniProtKB"/>
</dbReference>
<dbReference type="GO" id="GO:0051903">
    <property type="term" value="F:S-(hydroxymethyl)glutathione dehydrogenase [NAD(P)+] activity"/>
    <property type="evidence" value="ECO:0007669"/>
    <property type="project" value="TreeGrafter"/>
</dbReference>
<dbReference type="GO" id="GO:0008270">
    <property type="term" value="F:zinc ion binding"/>
    <property type="evidence" value="ECO:0007669"/>
    <property type="project" value="InterPro"/>
</dbReference>
<dbReference type="GO" id="GO:0010430">
    <property type="term" value="P:fatty acid omega-oxidation"/>
    <property type="evidence" value="ECO:0000250"/>
    <property type="project" value="UniProtKB"/>
</dbReference>
<dbReference type="GO" id="GO:0046294">
    <property type="term" value="P:formaldehyde catabolic process"/>
    <property type="evidence" value="ECO:0007669"/>
    <property type="project" value="TreeGrafter"/>
</dbReference>
<dbReference type="GO" id="GO:0042572">
    <property type="term" value="P:retinol metabolic process"/>
    <property type="evidence" value="ECO:0000250"/>
    <property type="project" value="UniProtKB"/>
</dbReference>
<dbReference type="CDD" id="cd08299">
    <property type="entry name" value="alcohol_DH_class_I_II_IV"/>
    <property type="match status" value="1"/>
</dbReference>
<dbReference type="FunFam" id="3.40.50.720:FF:000003">
    <property type="entry name" value="S-(hydroxymethyl)glutathione dehydrogenase"/>
    <property type="match status" value="1"/>
</dbReference>
<dbReference type="FunFam" id="3.90.180.10:FF:000001">
    <property type="entry name" value="S-(hydroxymethyl)glutathione dehydrogenase"/>
    <property type="match status" value="1"/>
</dbReference>
<dbReference type="Gene3D" id="3.90.180.10">
    <property type="entry name" value="Medium-chain alcohol dehydrogenases, catalytic domain"/>
    <property type="match status" value="1"/>
</dbReference>
<dbReference type="Gene3D" id="3.40.50.720">
    <property type="entry name" value="NAD(P)-binding Rossmann-like Domain"/>
    <property type="match status" value="1"/>
</dbReference>
<dbReference type="InterPro" id="IPR013149">
    <property type="entry name" value="ADH-like_C"/>
</dbReference>
<dbReference type="InterPro" id="IPR013154">
    <property type="entry name" value="ADH-like_N"/>
</dbReference>
<dbReference type="InterPro" id="IPR002328">
    <property type="entry name" value="ADH_Zn_CS"/>
</dbReference>
<dbReference type="InterPro" id="IPR011032">
    <property type="entry name" value="GroES-like_sf"/>
</dbReference>
<dbReference type="InterPro" id="IPR036291">
    <property type="entry name" value="NAD(P)-bd_dom_sf"/>
</dbReference>
<dbReference type="InterPro" id="IPR020843">
    <property type="entry name" value="PKS_ER"/>
</dbReference>
<dbReference type="PANTHER" id="PTHR43880">
    <property type="entry name" value="ALCOHOL DEHYDROGENASE"/>
    <property type="match status" value="1"/>
</dbReference>
<dbReference type="PANTHER" id="PTHR43880:SF14">
    <property type="entry name" value="ALL-TRANS-RETINOL DEHYDROGENASE [NAD(+)] ADH4"/>
    <property type="match status" value="1"/>
</dbReference>
<dbReference type="Pfam" id="PF08240">
    <property type="entry name" value="ADH_N"/>
    <property type="match status" value="1"/>
</dbReference>
<dbReference type="Pfam" id="PF00107">
    <property type="entry name" value="ADH_zinc_N"/>
    <property type="match status" value="1"/>
</dbReference>
<dbReference type="SMART" id="SM00829">
    <property type="entry name" value="PKS_ER"/>
    <property type="match status" value="1"/>
</dbReference>
<dbReference type="SUPFAM" id="SSF50129">
    <property type="entry name" value="GroES-like"/>
    <property type="match status" value="2"/>
</dbReference>
<dbReference type="SUPFAM" id="SSF51735">
    <property type="entry name" value="NAD(P)-binding Rossmann-fold domains"/>
    <property type="match status" value="1"/>
</dbReference>
<dbReference type="PROSITE" id="PS00059">
    <property type="entry name" value="ADH_ZINC"/>
    <property type="match status" value="1"/>
</dbReference>